<protein>
    <recommendedName>
        <fullName evidence="1">Large ribosomal subunit protein uL23</fullName>
    </recommendedName>
    <alternativeName>
        <fullName evidence="2">50S ribosomal protein L23</fullName>
    </alternativeName>
</protein>
<evidence type="ECO:0000255" key="1">
    <source>
        <dbReference type="HAMAP-Rule" id="MF_01369"/>
    </source>
</evidence>
<evidence type="ECO:0000305" key="2"/>
<organism>
    <name type="scientific">Brucella abortus biovar 1 (strain 9-941)</name>
    <dbReference type="NCBI Taxonomy" id="262698"/>
    <lineage>
        <taxon>Bacteria</taxon>
        <taxon>Pseudomonadati</taxon>
        <taxon>Pseudomonadota</taxon>
        <taxon>Alphaproteobacteria</taxon>
        <taxon>Hyphomicrobiales</taxon>
        <taxon>Brucellaceae</taxon>
        <taxon>Brucella/Ochrobactrum group</taxon>
        <taxon>Brucella</taxon>
    </lineage>
</organism>
<comment type="function">
    <text evidence="1">One of the early assembly proteins it binds 23S rRNA. One of the proteins that surrounds the polypeptide exit tunnel on the outside of the ribosome. Forms the main docking site for trigger factor binding to the ribosome.</text>
</comment>
<comment type="subunit">
    <text evidence="1">Part of the 50S ribosomal subunit. Contacts protein L29, and trigger factor when it is bound to the ribosome.</text>
</comment>
<comment type="similarity">
    <text evidence="1">Belongs to the universal ribosomal protein uL23 family.</text>
</comment>
<proteinExistence type="inferred from homology"/>
<gene>
    <name evidence="1" type="primary">rplW</name>
    <name type="ordered locus">BruAb1_1236</name>
</gene>
<sequence length="97" mass="10517">MTDLRHYDVIVSPVITEKSTIVSEHNQVVFNVARKATKPEIKAAVEALFGVKVTAVNTAVRKGKVKRFRGLVGRQSDVKKAIVTLAEGQSIDVSTGL</sequence>
<reference key="1">
    <citation type="journal article" date="2005" name="J. Bacteriol.">
        <title>Completion of the genome sequence of Brucella abortus and comparison to the highly similar genomes of Brucella melitensis and Brucella suis.</title>
        <authorList>
            <person name="Halling S.M."/>
            <person name="Peterson-Burch B.D."/>
            <person name="Bricker B.J."/>
            <person name="Zuerner R.L."/>
            <person name="Qing Z."/>
            <person name="Li L.-L."/>
            <person name="Kapur V."/>
            <person name="Alt D.P."/>
            <person name="Olsen S.C."/>
        </authorList>
    </citation>
    <scope>NUCLEOTIDE SEQUENCE [LARGE SCALE GENOMIC DNA]</scope>
    <source>
        <strain>9-941</strain>
    </source>
</reference>
<accession>Q57CR0</accession>
<keyword id="KW-0687">Ribonucleoprotein</keyword>
<keyword id="KW-0689">Ribosomal protein</keyword>
<keyword id="KW-0694">RNA-binding</keyword>
<keyword id="KW-0699">rRNA-binding</keyword>
<dbReference type="EMBL" id="AE017223">
    <property type="protein sequence ID" value="AAX74574.1"/>
    <property type="molecule type" value="Genomic_DNA"/>
</dbReference>
<dbReference type="RefSeq" id="WP_002964360.1">
    <property type="nucleotide sequence ID" value="NC_006932.1"/>
</dbReference>
<dbReference type="SMR" id="Q57CR0"/>
<dbReference type="EnsemblBacteria" id="AAX74574">
    <property type="protein sequence ID" value="AAX74574"/>
    <property type="gene ID" value="BruAb1_1236"/>
</dbReference>
<dbReference type="KEGG" id="bmb:BruAb1_1236"/>
<dbReference type="HOGENOM" id="CLU_037562_3_1_5"/>
<dbReference type="Proteomes" id="UP000000540">
    <property type="component" value="Chromosome I"/>
</dbReference>
<dbReference type="GO" id="GO:1990904">
    <property type="term" value="C:ribonucleoprotein complex"/>
    <property type="evidence" value="ECO:0007669"/>
    <property type="project" value="UniProtKB-KW"/>
</dbReference>
<dbReference type="GO" id="GO:0005840">
    <property type="term" value="C:ribosome"/>
    <property type="evidence" value="ECO:0007669"/>
    <property type="project" value="UniProtKB-KW"/>
</dbReference>
<dbReference type="GO" id="GO:0019843">
    <property type="term" value="F:rRNA binding"/>
    <property type="evidence" value="ECO:0007669"/>
    <property type="project" value="UniProtKB-UniRule"/>
</dbReference>
<dbReference type="GO" id="GO:0003735">
    <property type="term" value="F:structural constituent of ribosome"/>
    <property type="evidence" value="ECO:0007669"/>
    <property type="project" value="InterPro"/>
</dbReference>
<dbReference type="GO" id="GO:0006412">
    <property type="term" value="P:translation"/>
    <property type="evidence" value="ECO:0007669"/>
    <property type="project" value="UniProtKB-UniRule"/>
</dbReference>
<dbReference type="FunFam" id="3.30.70.330:FF:000001">
    <property type="entry name" value="50S ribosomal protein L23"/>
    <property type="match status" value="1"/>
</dbReference>
<dbReference type="Gene3D" id="3.30.70.330">
    <property type="match status" value="1"/>
</dbReference>
<dbReference type="HAMAP" id="MF_01369_B">
    <property type="entry name" value="Ribosomal_uL23_B"/>
    <property type="match status" value="1"/>
</dbReference>
<dbReference type="InterPro" id="IPR012677">
    <property type="entry name" value="Nucleotide-bd_a/b_plait_sf"/>
</dbReference>
<dbReference type="InterPro" id="IPR013025">
    <property type="entry name" value="Ribosomal_uL23-like"/>
</dbReference>
<dbReference type="InterPro" id="IPR012678">
    <property type="entry name" value="Ribosomal_uL23/eL15/eS24_sf"/>
</dbReference>
<dbReference type="NCBIfam" id="NF004359">
    <property type="entry name" value="PRK05738.1-3"/>
    <property type="match status" value="1"/>
</dbReference>
<dbReference type="NCBIfam" id="NF004360">
    <property type="entry name" value="PRK05738.1-5"/>
    <property type="match status" value="1"/>
</dbReference>
<dbReference type="NCBIfam" id="NF004363">
    <property type="entry name" value="PRK05738.2-4"/>
    <property type="match status" value="1"/>
</dbReference>
<dbReference type="PANTHER" id="PTHR11620">
    <property type="entry name" value="60S RIBOSOMAL PROTEIN L23A"/>
    <property type="match status" value="1"/>
</dbReference>
<dbReference type="Pfam" id="PF00276">
    <property type="entry name" value="Ribosomal_L23"/>
    <property type="match status" value="1"/>
</dbReference>
<dbReference type="SUPFAM" id="SSF54189">
    <property type="entry name" value="Ribosomal proteins S24e, L23 and L15e"/>
    <property type="match status" value="1"/>
</dbReference>
<name>RL23_BRUAB</name>
<feature type="chain" id="PRO_0000272715" description="Large ribosomal subunit protein uL23">
    <location>
        <begin position="1"/>
        <end position="97"/>
    </location>
</feature>